<sequence length="173" mass="18885">MALRVVRSVRALLCTLRAVPSPAAPCPPRPWQLGVGAVRTLRTGPALLSVRKFTEKHEWVTTENGIGTVGISNFAQEALGDVVYCSLPEVGTKLNKQDEFGALESVKAASELYSPLSGEVTEINEALAENPGLVNKSCYEDGWLIKMTLSNPSELDELMSEEAYEKYIKSIEE</sequence>
<dbReference type="EMBL" id="D00723">
    <property type="protein sequence ID" value="BAA00625.1"/>
    <property type="molecule type" value="mRNA"/>
</dbReference>
<dbReference type="EMBL" id="M69175">
    <property type="protein sequence ID" value="AAA36011.1"/>
    <property type="molecule type" value="mRNA"/>
</dbReference>
<dbReference type="EMBL" id="AY310735">
    <property type="protein sequence ID" value="AAP50260.1"/>
    <property type="molecule type" value="Genomic_DNA"/>
</dbReference>
<dbReference type="EMBL" id="AC092718">
    <property type="status" value="NOT_ANNOTATED_CDS"/>
    <property type="molecule type" value="Genomic_DNA"/>
</dbReference>
<dbReference type="EMBL" id="BC000790">
    <property type="protein sequence ID" value="AAH00790.1"/>
    <property type="molecule type" value="mRNA"/>
</dbReference>
<dbReference type="EMBL" id="BC020922">
    <property type="protein sequence ID" value="AAH20922.1"/>
    <property type="molecule type" value="mRNA"/>
</dbReference>
<dbReference type="CCDS" id="CCDS10933.1"/>
<dbReference type="PIR" id="A36662">
    <property type="entry name" value="GCHUH"/>
</dbReference>
<dbReference type="RefSeq" id="NP_004474.2">
    <property type="nucleotide sequence ID" value="NM_004483.4"/>
</dbReference>
<dbReference type="SMR" id="P23434"/>
<dbReference type="BioGRID" id="108923">
    <property type="interactions" value="61"/>
</dbReference>
<dbReference type="FunCoup" id="P23434">
    <property type="interactions" value="1504"/>
</dbReference>
<dbReference type="IntAct" id="P23434">
    <property type="interactions" value="19"/>
</dbReference>
<dbReference type="STRING" id="9606.ENSP00000319531"/>
<dbReference type="DrugBank" id="DB03187">
    <property type="generic name" value="6-(Hydroxyethyldithio)-8-(Aminomethylthio)Octanoic Acid"/>
</dbReference>
<dbReference type="DrugBank" id="DB03760">
    <property type="generic name" value="Dihydrolipoic Acid"/>
</dbReference>
<dbReference type="DrugBank" id="DB00145">
    <property type="generic name" value="Glycine"/>
</dbReference>
<dbReference type="GlyGen" id="P23434">
    <property type="glycosylation" value="1 site, 1 O-linked glycan (1 site)"/>
</dbReference>
<dbReference type="iPTMnet" id="P23434"/>
<dbReference type="PhosphoSitePlus" id="P23434"/>
<dbReference type="SwissPalm" id="P23434"/>
<dbReference type="BioMuta" id="GCSH"/>
<dbReference type="DMDM" id="311033385"/>
<dbReference type="jPOST" id="P23434"/>
<dbReference type="MassIVE" id="P23434"/>
<dbReference type="PaxDb" id="9606-ENSP00000319531"/>
<dbReference type="PeptideAtlas" id="P23434"/>
<dbReference type="ProteomicsDB" id="54093"/>
<dbReference type="Pumba" id="P23434"/>
<dbReference type="TopDownProteomics" id="P23434"/>
<dbReference type="Antibodypedia" id="30442">
    <property type="antibodies" value="225 antibodies from 29 providers"/>
</dbReference>
<dbReference type="DNASU" id="2653"/>
<dbReference type="Ensembl" id="ENST00000315467.9">
    <property type="protein sequence ID" value="ENSP00000319531.3"/>
    <property type="gene ID" value="ENSG00000140905.11"/>
</dbReference>
<dbReference type="Ensembl" id="ENST00000709349.1">
    <property type="protein sequence ID" value="ENSP00000517634.1"/>
    <property type="gene ID" value="ENSG00000291958.1"/>
</dbReference>
<dbReference type="GeneID" id="2653"/>
<dbReference type="KEGG" id="hsa:2653"/>
<dbReference type="MANE-Select" id="ENST00000315467.9">
    <property type="protein sequence ID" value="ENSP00000319531.3"/>
    <property type="RefSeq nucleotide sequence ID" value="NM_004483.5"/>
    <property type="RefSeq protein sequence ID" value="NP_004474.2"/>
</dbReference>
<dbReference type="UCSC" id="uc002fgd.4">
    <property type="organism name" value="human"/>
</dbReference>
<dbReference type="AGR" id="HGNC:4208"/>
<dbReference type="CTD" id="2653"/>
<dbReference type="DisGeNET" id="2653"/>
<dbReference type="GeneCards" id="GCSH"/>
<dbReference type="GeneReviews" id="GCSH"/>
<dbReference type="HGNC" id="HGNC:4208">
    <property type="gene designation" value="GCSH"/>
</dbReference>
<dbReference type="HPA" id="ENSG00000140905">
    <property type="expression patterns" value="Tissue enhanced (brain)"/>
</dbReference>
<dbReference type="MalaCards" id="GCSH"/>
<dbReference type="MIM" id="238330">
    <property type="type" value="gene"/>
</dbReference>
<dbReference type="MIM" id="620423">
    <property type="type" value="phenotype"/>
</dbReference>
<dbReference type="neXtProt" id="NX_P23434"/>
<dbReference type="OpenTargets" id="ENSG00000140905"/>
<dbReference type="Orphanet" id="289863">
    <property type="disease" value="Atypical glycine encephalopathy"/>
</dbReference>
<dbReference type="Orphanet" id="289860">
    <property type="disease" value="Infantile glycine encephalopathy"/>
</dbReference>
<dbReference type="Orphanet" id="289857">
    <property type="disease" value="Neonatal glycine encephalopathy"/>
</dbReference>
<dbReference type="VEuPathDB" id="HostDB:ENSG00000140905"/>
<dbReference type="eggNOG" id="KOG3373">
    <property type="taxonomic scope" value="Eukaryota"/>
</dbReference>
<dbReference type="GeneTree" id="ENSGT00390000011666"/>
<dbReference type="HOGENOM" id="CLU_097408_1_1_1"/>
<dbReference type="InParanoid" id="P23434"/>
<dbReference type="OMA" id="KEHEWIR"/>
<dbReference type="OrthoDB" id="10264154at2759"/>
<dbReference type="PAN-GO" id="P23434">
    <property type="GO annotations" value="4 GO annotations based on evolutionary models"/>
</dbReference>
<dbReference type="PhylomeDB" id="P23434"/>
<dbReference type="TreeFam" id="TF300258"/>
<dbReference type="BioCyc" id="MetaCyc:HS06771-MONOMER"/>
<dbReference type="BRENDA" id="1.4.1.27">
    <property type="organism ID" value="2681"/>
</dbReference>
<dbReference type="BRENDA" id="1.4.4.2">
    <property type="organism ID" value="2681"/>
</dbReference>
<dbReference type="PathwayCommons" id="P23434"/>
<dbReference type="Reactome" id="R-HSA-6783984">
    <property type="pathway name" value="Glycine degradation"/>
</dbReference>
<dbReference type="Reactome" id="R-HSA-9857492">
    <property type="pathway name" value="Protein lipoylation"/>
</dbReference>
<dbReference type="SABIO-RK" id="P23434"/>
<dbReference type="SignaLink" id="P23434"/>
<dbReference type="SIGNOR" id="P23434"/>
<dbReference type="BioGRID-ORCS" id="2653">
    <property type="hits" value="161 hits in 1149 CRISPR screens"/>
</dbReference>
<dbReference type="GeneWiki" id="GCSH"/>
<dbReference type="GenomeRNAi" id="2653"/>
<dbReference type="Pharos" id="P23434">
    <property type="development level" value="Tbio"/>
</dbReference>
<dbReference type="PRO" id="PR:P23434"/>
<dbReference type="Proteomes" id="UP000005640">
    <property type="component" value="Chromosome 16"/>
</dbReference>
<dbReference type="RNAct" id="P23434">
    <property type="molecule type" value="protein"/>
</dbReference>
<dbReference type="Bgee" id="ENSG00000140905">
    <property type="expression patterns" value="Expressed in C1 segment of cervical spinal cord and 103 other cell types or tissues"/>
</dbReference>
<dbReference type="ExpressionAtlas" id="P23434">
    <property type="expression patterns" value="baseline and differential"/>
</dbReference>
<dbReference type="GO" id="GO:0005960">
    <property type="term" value="C:glycine cleavage complex"/>
    <property type="evidence" value="ECO:0000318"/>
    <property type="project" value="GO_Central"/>
</dbReference>
<dbReference type="GO" id="GO:0005759">
    <property type="term" value="C:mitochondrial matrix"/>
    <property type="evidence" value="ECO:0000304"/>
    <property type="project" value="Reactome"/>
</dbReference>
<dbReference type="GO" id="GO:0005739">
    <property type="term" value="C:mitochondrion"/>
    <property type="evidence" value="ECO:0006056"/>
    <property type="project" value="FlyBase"/>
</dbReference>
<dbReference type="GO" id="GO:0019464">
    <property type="term" value="P:glycine decarboxylation via glycine cleavage system"/>
    <property type="evidence" value="ECO:0000318"/>
    <property type="project" value="GO_Central"/>
</dbReference>
<dbReference type="CDD" id="cd06848">
    <property type="entry name" value="GCS_H"/>
    <property type="match status" value="1"/>
</dbReference>
<dbReference type="FunFam" id="2.40.50.100:FF:000045">
    <property type="entry name" value="Glycine cleavage system H protein"/>
    <property type="match status" value="1"/>
</dbReference>
<dbReference type="Gene3D" id="2.40.50.100">
    <property type="match status" value="1"/>
</dbReference>
<dbReference type="HAMAP" id="MF_00272">
    <property type="entry name" value="GcvH"/>
    <property type="match status" value="1"/>
</dbReference>
<dbReference type="InterPro" id="IPR003016">
    <property type="entry name" value="2-oxoA_DH_lipoyl-BS"/>
</dbReference>
<dbReference type="InterPro" id="IPR000089">
    <property type="entry name" value="Biotin_lipoyl"/>
</dbReference>
<dbReference type="InterPro" id="IPR002930">
    <property type="entry name" value="GCV_H"/>
</dbReference>
<dbReference type="InterPro" id="IPR033753">
    <property type="entry name" value="GCV_H/Fam206"/>
</dbReference>
<dbReference type="InterPro" id="IPR017453">
    <property type="entry name" value="GCV_H_sub"/>
</dbReference>
<dbReference type="InterPro" id="IPR011053">
    <property type="entry name" value="Single_hybrid_motif"/>
</dbReference>
<dbReference type="NCBIfam" id="TIGR00527">
    <property type="entry name" value="gcvH"/>
    <property type="match status" value="1"/>
</dbReference>
<dbReference type="NCBIfam" id="NF002270">
    <property type="entry name" value="PRK01202.1"/>
    <property type="match status" value="1"/>
</dbReference>
<dbReference type="PANTHER" id="PTHR11715">
    <property type="entry name" value="GLYCINE CLEAVAGE SYSTEM H PROTEIN"/>
    <property type="match status" value="1"/>
</dbReference>
<dbReference type="PANTHER" id="PTHR11715:SF42">
    <property type="entry name" value="GLYCINE CLEAVAGE SYSTEM H PROTEIN, MITOCHONDRIAL"/>
    <property type="match status" value="1"/>
</dbReference>
<dbReference type="Pfam" id="PF01597">
    <property type="entry name" value="GCV_H"/>
    <property type="match status" value="1"/>
</dbReference>
<dbReference type="SUPFAM" id="SSF51230">
    <property type="entry name" value="Single hybrid motif"/>
    <property type="match status" value="1"/>
</dbReference>
<dbReference type="PROSITE" id="PS50968">
    <property type="entry name" value="BIOTINYL_LIPOYL"/>
    <property type="match status" value="1"/>
</dbReference>
<dbReference type="PROSITE" id="PS00189">
    <property type="entry name" value="LIPOYL"/>
    <property type="match status" value="1"/>
</dbReference>
<name>GCSH_HUMAN</name>
<comment type="function">
    <text evidence="4 7">The glycine cleavage system catalyzes the degradation of glycine. The H protein (GCSH) shuttles the methylamine group of glycine from the P protein (GLDC) to the T protein (GCST). Has a pivotal role in the lipoylation of enzymes involved in cellular energetics such as the mitochondrial dihydrolipoyllysine-residue acetyltransferase component of pyruvate dehydrogenase complex (DLAT), and the mitochondrial dihydrolipoyllysine-residue succinyltransferase component of 2-oxoglutarate dehydrogenase complex (DLST) (PubMed:36190515).</text>
</comment>
<comment type="cofactor">
    <cofactor evidence="4">
        <name>(R)-lipoate</name>
        <dbReference type="ChEBI" id="CHEBI:83088"/>
    </cofactor>
    <text evidence="4">Binds 1 lipoyl cofactor covalently.</text>
</comment>
<comment type="subunit">
    <text evidence="1">Interacts with GLDC (By similarity). The glycine cleavage system is composed of four proteins: P (GLDC), T (GCST), L (DLD) and H (GCSH).</text>
</comment>
<comment type="interaction">
    <interactant intactId="EBI-715444">
        <id>P23434</id>
    </interactant>
    <interactant intactId="EBI-7062247">
        <id>Q9UHD4</id>
        <label>CIDEB</label>
    </interactant>
    <organismsDiffer>false</organismsDiffer>
    <experiments>3</experiments>
</comment>
<comment type="interaction">
    <interactant intactId="EBI-715444">
        <id>P23434</id>
    </interactant>
    <interactant intactId="EBI-739552">
        <id>P43364</id>
        <label>MAGEA11</label>
    </interactant>
    <organismsDiffer>false</organismsDiffer>
    <experiments>3</experiments>
</comment>
<comment type="interaction">
    <interactant intactId="EBI-715444">
        <id>P23434</id>
    </interactant>
    <interactant intactId="EBI-1045155">
        <id>P43360</id>
        <label>MAGEA6</label>
    </interactant>
    <organismsDiffer>false</organismsDiffer>
    <experiments>3</experiments>
</comment>
<comment type="interaction">
    <interactant intactId="EBI-715444">
        <id>P23434</id>
    </interactant>
    <interactant intactId="EBI-394704">
        <id>Q9P086</id>
        <label>MED11</label>
    </interactant>
    <organismsDiffer>false</organismsDiffer>
    <experiments>3</experiments>
</comment>
<comment type="interaction">
    <interactant intactId="EBI-715444">
        <id>P23434</id>
    </interactant>
    <interactant intactId="EBI-1104552">
        <id>Q9NYP9</id>
        <label>MIS18A</label>
    </interactant>
    <organismsDiffer>false</organismsDiffer>
    <experiments>3</experiments>
</comment>
<comment type="interaction">
    <interactant intactId="EBI-715444">
        <id>P23434</id>
    </interactant>
    <interactant intactId="EBI-372942">
        <id>Q13287</id>
        <label>NMI</label>
    </interactant>
    <organismsDiffer>false</organismsDiffer>
    <experiments>4</experiments>
</comment>
<comment type="interaction">
    <interactant intactId="EBI-715444">
        <id>P23434</id>
    </interactant>
    <interactant intactId="EBI-17589229">
        <id>Q6NTF9-3</id>
        <label>RHBDD2</label>
    </interactant>
    <organismsDiffer>false</organismsDiffer>
    <experiments>3</experiments>
</comment>
<comment type="subcellular location">
    <subcellularLocation>
        <location evidence="7">Mitochondrion</location>
    </subcellularLocation>
</comment>
<comment type="disease" evidence="6 7">
    <disease id="DI-06705">
        <name>Multiple mitochondrial dysfunctions syndrome 7</name>
        <acronym>MMDS7</acronym>
        <description>An autosomal recessive disorder biochemically characterized by glycine accumulation in body fluids, including the cerebrospinal fluid, with an elevated cerebrospinal fluid/plasma glycine ratio. The broad clinical spectrum ranges from neonatal fatal glycine encephalopathy to an attenuated phenotype of developmental delay, limited verbal communication, behavioral problems, seizures and variable movement problems. Death in infancy or early childhood may occur.</description>
        <dbReference type="MIM" id="620423"/>
    </disease>
    <text>The disease is caused by variants affecting the gene represented in this entry.</text>
</comment>
<comment type="similarity">
    <text evidence="10">Belongs to the GcvH family.</text>
</comment>
<feature type="transit peptide" description="Mitochondrion">
    <location>
        <begin position="1"/>
        <end position="48"/>
    </location>
</feature>
<feature type="chain" id="PRO_0000010723" description="Glycine cleavage system H protein, mitochondrial">
    <location>
        <begin position="49"/>
        <end position="173"/>
    </location>
</feature>
<feature type="domain" description="Lipoyl-binding" evidence="2">
    <location>
        <begin position="66"/>
        <end position="148"/>
    </location>
</feature>
<feature type="modified residue" description="N6-lipoyllysine" evidence="2 4">
    <location>
        <position position="107"/>
    </location>
</feature>
<feature type="sequence variant" id="VAR_018846" description="In dbSNP:rs8052579." evidence="3 4 5 8">
    <original>S</original>
    <variation>L</variation>
    <location>
        <position position="21"/>
    </location>
</feature>
<feature type="sequence variant" id="VAR_088577" description="In MMDS7; uncertain significance." evidence="7">
    <original>H</original>
    <variation>R</variation>
    <location>
        <position position="57"/>
    </location>
</feature>
<feature type="sequence variant" id="VAR_018847" description="In dbSNP:rs8177877." evidence="8">
    <original>N</original>
    <variation>S</variation>
    <location>
        <position position="73"/>
    </location>
</feature>
<feature type="sequence variant" id="VAR_088578" description="In MMDS7; likely pathogenic." evidence="7">
    <location>
        <begin position="76"/>
        <end position="173"/>
    </location>
</feature>
<feature type="sequence variant" id="VAR_088579" description="In MMDS7; uncertain significance; reduced lipoylation of DLAT and DLST in homozygous patient cells; no effect on localization to mitochondrion." evidence="7">
    <original>P</original>
    <variation>L</variation>
    <location>
        <position position="115"/>
    </location>
</feature>
<feature type="sequence variant" id="VAR_088580" description="In MMDS7; uncertain significance; reduced function in glycine decarboxylation via glycine cleavage system; no effect on localization to mitochondrion." evidence="7">
    <original>T</original>
    <variation>P</variation>
    <location>
        <position position="148"/>
    </location>
</feature>
<protein>
    <recommendedName>
        <fullName evidence="9">Glycine cleavage system H protein, mitochondrial</fullName>
    </recommendedName>
    <alternativeName>
        <fullName>Lipoic acid-containing protein</fullName>
    </alternativeName>
</protein>
<evidence type="ECO:0000250" key="1">
    <source>
        <dbReference type="UniProtKB" id="P11183"/>
    </source>
</evidence>
<evidence type="ECO:0000255" key="2">
    <source>
        <dbReference type="PROSITE-ProRule" id="PRU01066"/>
    </source>
</evidence>
<evidence type="ECO:0000269" key="3">
    <source>
    </source>
</evidence>
<evidence type="ECO:0000269" key="4">
    <source>
    </source>
</evidence>
<evidence type="ECO:0000269" key="5">
    <source>
    </source>
</evidence>
<evidence type="ECO:0000269" key="6">
    <source>
    </source>
</evidence>
<evidence type="ECO:0000269" key="7">
    <source>
    </source>
</evidence>
<evidence type="ECO:0000269" key="8">
    <source ref="3"/>
</evidence>
<evidence type="ECO:0000303" key="9">
    <source>
    </source>
</evidence>
<evidence type="ECO:0000305" key="10"/>
<evidence type="ECO:0000312" key="11">
    <source>
        <dbReference type="HGNC" id="HGNC:4208"/>
    </source>
</evidence>
<keyword id="KW-0225">Disease variant</keyword>
<keyword id="KW-0450">Lipoyl</keyword>
<keyword id="KW-0496">Mitochondrion</keyword>
<keyword id="KW-0523">Neurodegeneration</keyword>
<keyword id="KW-1267">Proteomics identification</keyword>
<keyword id="KW-1185">Reference proteome</keyword>
<keyword id="KW-0809">Transit peptide</keyword>
<proteinExistence type="evidence at protein level"/>
<organism>
    <name type="scientific">Homo sapiens</name>
    <name type="common">Human</name>
    <dbReference type="NCBI Taxonomy" id="9606"/>
    <lineage>
        <taxon>Eukaryota</taxon>
        <taxon>Metazoa</taxon>
        <taxon>Chordata</taxon>
        <taxon>Craniata</taxon>
        <taxon>Vertebrata</taxon>
        <taxon>Euteleostomi</taxon>
        <taxon>Mammalia</taxon>
        <taxon>Eutheria</taxon>
        <taxon>Euarchontoglires</taxon>
        <taxon>Primates</taxon>
        <taxon>Haplorrhini</taxon>
        <taxon>Catarrhini</taxon>
        <taxon>Hominidae</taxon>
        <taxon>Homo</taxon>
    </lineage>
</organism>
<accession>P23434</accession>
<accession>Q9H1E9</accession>
<reference key="1">
    <citation type="journal article" date="1991" name="Am. J. Hum. Genet.">
        <title>The glycine cleavage system: structure of a cDNA encoding human H-protein, and partial characterization of its gene in patients with hyperglycinemias.</title>
        <authorList>
            <person name="Koyata H."/>
            <person name="Hiraga K."/>
        </authorList>
    </citation>
    <scope>NUCLEOTIDE SEQUENCE [MRNA]</scope>
    <scope>FUNCTION</scope>
    <scope>VARIANT LEU-21</scope>
    <scope>LIPOYLATION AT LYS-107</scope>
    <scope>COFACTOR</scope>
</reference>
<reference key="2">
    <citation type="journal article" date="1991" name="Biochem. Biophys. Res. Commun.">
        <title>The primary structure of human H-protein of the glycine cleavage system deduced by cDNA cloning.</title>
        <authorList>
            <person name="Fujiwara K."/>
            <person name="Okamura-Ikeda K."/>
            <person name="Hayasaka K."/>
            <person name="Motokawa Y."/>
        </authorList>
    </citation>
    <scope>NUCLEOTIDE SEQUENCE [MRNA]</scope>
    <scope>VARIANT LEU-21</scope>
</reference>
<reference key="3">
    <citation type="submission" date="2003-05" db="EMBL/GenBank/DDBJ databases">
        <authorList>
            <consortium name="NIEHS SNPs program"/>
        </authorList>
    </citation>
    <scope>NUCLEOTIDE SEQUENCE [GENOMIC DNA]</scope>
    <scope>VARIANTS LEU-21 AND SER-73</scope>
</reference>
<reference key="4">
    <citation type="journal article" date="2004" name="Nature">
        <title>The sequence and analysis of duplication-rich human chromosome 16.</title>
        <authorList>
            <person name="Martin J."/>
            <person name="Han C."/>
            <person name="Gordon L.A."/>
            <person name="Terry A."/>
            <person name="Prabhakar S."/>
            <person name="She X."/>
            <person name="Xie G."/>
            <person name="Hellsten U."/>
            <person name="Chan Y.M."/>
            <person name="Altherr M."/>
            <person name="Couronne O."/>
            <person name="Aerts A."/>
            <person name="Bajorek E."/>
            <person name="Black S."/>
            <person name="Blumer H."/>
            <person name="Branscomb E."/>
            <person name="Brown N.C."/>
            <person name="Bruno W.J."/>
            <person name="Buckingham J.M."/>
            <person name="Callen D.F."/>
            <person name="Campbell C.S."/>
            <person name="Campbell M.L."/>
            <person name="Campbell E.W."/>
            <person name="Caoile C."/>
            <person name="Challacombe J.F."/>
            <person name="Chasteen L.A."/>
            <person name="Chertkov O."/>
            <person name="Chi H.C."/>
            <person name="Christensen M."/>
            <person name="Clark L.M."/>
            <person name="Cohn J.D."/>
            <person name="Denys M."/>
            <person name="Detter J.C."/>
            <person name="Dickson M."/>
            <person name="Dimitrijevic-Bussod M."/>
            <person name="Escobar J."/>
            <person name="Fawcett J.J."/>
            <person name="Flowers D."/>
            <person name="Fotopulos D."/>
            <person name="Glavina T."/>
            <person name="Gomez M."/>
            <person name="Gonzales E."/>
            <person name="Goodstein D."/>
            <person name="Goodwin L.A."/>
            <person name="Grady D.L."/>
            <person name="Grigoriev I."/>
            <person name="Groza M."/>
            <person name="Hammon N."/>
            <person name="Hawkins T."/>
            <person name="Haydu L."/>
            <person name="Hildebrand C.E."/>
            <person name="Huang W."/>
            <person name="Israni S."/>
            <person name="Jett J."/>
            <person name="Jewett P.B."/>
            <person name="Kadner K."/>
            <person name="Kimball H."/>
            <person name="Kobayashi A."/>
            <person name="Krawczyk M.-C."/>
            <person name="Leyba T."/>
            <person name="Longmire J.L."/>
            <person name="Lopez F."/>
            <person name="Lou Y."/>
            <person name="Lowry S."/>
            <person name="Ludeman T."/>
            <person name="Manohar C.F."/>
            <person name="Mark G.A."/>
            <person name="McMurray K.L."/>
            <person name="Meincke L.J."/>
            <person name="Morgan J."/>
            <person name="Moyzis R.K."/>
            <person name="Mundt M.O."/>
            <person name="Munk A.C."/>
            <person name="Nandkeshwar R.D."/>
            <person name="Pitluck S."/>
            <person name="Pollard M."/>
            <person name="Predki P."/>
            <person name="Parson-Quintana B."/>
            <person name="Ramirez L."/>
            <person name="Rash S."/>
            <person name="Retterer J."/>
            <person name="Ricke D.O."/>
            <person name="Robinson D.L."/>
            <person name="Rodriguez A."/>
            <person name="Salamov A."/>
            <person name="Saunders E.H."/>
            <person name="Scott D."/>
            <person name="Shough T."/>
            <person name="Stallings R.L."/>
            <person name="Stalvey M."/>
            <person name="Sutherland R.D."/>
            <person name="Tapia R."/>
            <person name="Tesmer J.G."/>
            <person name="Thayer N."/>
            <person name="Thompson L.S."/>
            <person name="Tice H."/>
            <person name="Torney D.C."/>
            <person name="Tran-Gyamfi M."/>
            <person name="Tsai M."/>
            <person name="Ulanovsky L.E."/>
            <person name="Ustaszewska A."/>
            <person name="Vo N."/>
            <person name="White P.S."/>
            <person name="Williams A.L."/>
            <person name="Wills P.L."/>
            <person name="Wu J.-R."/>
            <person name="Wu K."/>
            <person name="Yang J."/>
            <person name="DeJong P."/>
            <person name="Bruce D."/>
            <person name="Doggett N.A."/>
            <person name="Deaven L."/>
            <person name="Schmutz J."/>
            <person name="Grimwood J."/>
            <person name="Richardson P."/>
            <person name="Rokhsar D.S."/>
            <person name="Eichler E.E."/>
            <person name="Gilna P."/>
            <person name="Lucas S.M."/>
            <person name="Myers R.M."/>
            <person name="Rubin E.M."/>
            <person name="Pennacchio L.A."/>
        </authorList>
    </citation>
    <scope>NUCLEOTIDE SEQUENCE [LARGE SCALE GENOMIC DNA]</scope>
</reference>
<reference key="5">
    <citation type="journal article" date="2004" name="Genome Res.">
        <title>The status, quality, and expansion of the NIH full-length cDNA project: the Mammalian Gene Collection (MGC).</title>
        <authorList>
            <consortium name="The MGC Project Team"/>
        </authorList>
    </citation>
    <scope>NUCLEOTIDE SEQUENCE [LARGE SCALE MRNA]</scope>
    <scope>VARIANT LEU-21</scope>
    <source>
        <tissue>Placenta</tissue>
        <tissue>Skeletal muscle</tissue>
    </source>
</reference>
<reference key="6">
    <citation type="journal article" date="2011" name="BMC Syst. Biol.">
        <title>Initial characterization of the human central proteome.</title>
        <authorList>
            <person name="Burkard T.R."/>
            <person name="Planyavsky M."/>
            <person name="Kaupe I."/>
            <person name="Breitwieser F.P."/>
            <person name="Buerckstuemmer T."/>
            <person name="Bennett K.L."/>
            <person name="Superti-Furga G."/>
            <person name="Colinge J."/>
        </authorList>
    </citation>
    <scope>IDENTIFICATION BY MASS SPECTROMETRY [LARGE SCALE ANALYSIS]</scope>
</reference>
<reference key="7">
    <citation type="journal article" date="2014" name="J. Proteomics">
        <title>An enzyme assisted RP-RPLC approach for in-depth analysis of human liver phosphoproteome.</title>
        <authorList>
            <person name="Bian Y."/>
            <person name="Song C."/>
            <person name="Cheng K."/>
            <person name="Dong M."/>
            <person name="Wang F."/>
            <person name="Huang J."/>
            <person name="Sun D."/>
            <person name="Wang L."/>
            <person name="Ye M."/>
            <person name="Zou H."/>
        </authorList>
    </citation>
    <scope>IDENTIFICATION BY MASS SPECTROMETRY [LARGE SCALE ANALYSIS]</scope>
    <source>
        <tissue>Liver</tissue>
    </source>
</reference>
<reference key="8">
    <citation type="journal article" date="2015" name="Proteomics">
        <title>N-terminome analysis of the human mitochondrial proteome.</title>
        <authorList>
            <person name="Vaca Jacome A.S."/>
            <person name="Rabilloud T."/>
            <person name="Schaeffer-Reiss C."/>
            <person name="Rompais M."/>
            <person name="Ayoub D."/>
            <person name="Lane L."/>
            <person name="Bairoch A."/>
            <person name="Van Dorsselaer A."/>
            <person name="Carapito C."/>
        </authorList>
    </citation>
    <scope>IDENTIFICATION BY MASS SPECTROMETRY [LARGE SCALE ANALYSIS]</scope>
</reference>
<reference key="9">
    <citation type="journal article" date="2021" name="Clin. Genet.">
        <title>Biallelic start loss variant, c.1A &gt; G in GCSH is associated with variant nonketotic hyperglycinemia.</title>
        <authorList>
            <person name="Majethia P."/>
            <person name="Somashekar P.H."/>
            <person name="Hebbar M."/>
            <person name="Kadavigere R."/>
            <person name="Praveen B.K."/>
            <person name="Girisha K.M."/>
            <person name="Shukla A."/>
        </authorList>
    </citation>
    <scope>INVOLVEMENT IN MMDS7</scope>
</reference>
<reference key="10">
    <citation type="journal article" date="2023" name="Hum. Mol. Genet.">
        <title>Pathogenic variants in GCSH encoding the moonlighting H-protein cause combined nonketotic hyperglycinemia and lipoate deficiency.</title>
        <authorList>
            <person name="Arribas-Carreira L."/>
            <person name="Dallabona C."/>
            <person name="Swanson M.A."/>
            <person name="Farris J."/>
            <person name="Oestergaard E."/>
            <person name="Tsiakas K."/>
            <person name="Hempel M."/>
            <person name="Aquaviva-Bourdain C."/>
            <person name="Koutsoukos S."/>
            <person name="Stence N.V."/>
            <person name="Magistrati M."/>
            <person name="Spector E.B."/>
            <person name="Kronquist K."/>
            <person name="Christensen M."/>
            <person name="Karstensen H.G."/>
            <person name="Feichtinger R.G."/>
            <person name="Achleitner M.T."/>
            <person name="Lawrence Merritt Ii J."/>
            <person name="Perez B."/>
            <person name="Ugarte M."/>
            <person name="Gruenewald S."/>
            <person name="Riela A.R."/>
            <person name="Julve N."/>
            <person name="Arnoux J.B."/>
            <person name="Haldar K."/>
            <person name="Donnini C."/>
            <person name="Santer R."/>
            <person name="Lund A.M."/>
            <person name="Mayr J.A."/>
            <person name="Rodriguez-Pombo P."/>
            <person name="Van Hove J.L.K."/>
        </authorList>
    </citation>
    <scope>VARIANTS MMDS7 ARG-57; 76-GLN--GLU-173 DEL; LEU-115 AND PRO-148</scope>
    <scope>CHARACTERIZATION OF VARIANTS MMDS7 LEU-115 AND PRO-148</scope>
    <scope>INVOLVEMENT IN MMDS7</scope>
    <scope>FUNCTION</scope>
    <scope>SUBCELLULAR LOCATION</scope>
</reference>
<gene>
    <name evidence="11" type="primary">GCSH</name>
</gene>